<comment type="catalytic activity">
    <reaction evidence="1">
        <text>tRNA(Cys) + L-cysteine + ATP = L-cysteinyl-tRNA(Cys) + AMP + diphosphate</text>
        <dbReference type="Rhea" id="RHEA:17773"/>
        <dbReference type="Rhea" id="RHEA-COMP:9661"/>
        <dbReference type="Rhea" id="RHEA-COMP:9679"/>
        <dbReference type="ChEBI" id="CHEBI:30616"/>
        <dbReference type="ChEBI" id="CHEBI:33019"/>
        <dbReference type="ChEBI" id="CHEBI:35235"/>
        <dbReference type="ChEBI" id="CHEBI:78442"/>
        <dbReference type="ChEBI" id="CHEBI:78517"/>
        <dbReference type="ChEBI" id="CHEBI:456215"/>
        <dbReference type="EC" id="6.1.1.16"/>
    </reaction>
</comment>
<comment type="cofactor">
    <cofactor evidence="1">
        <name>Zn(2+)</name>
        <dbReference type="ChEBI" id="CHEBI:29105"/>
    </cofactor>
    <text evidence="1">Binds 1 zinc ion per subunit.</text>
</comment>
<comment type="subunit">
    <text evidence="1">Monomer.</text>
</comment>
<comment type="subcellular location">
    <subcellularLocation>
        <location evidence="1">Cytoplasm</location>
    </subcellularLocation>
</comment>
<comment type="similarity">
    <text evidence="1">Belongs to the class-I aminoacyl-tRNA synthetase family.</text>
</comment>
<reference key="1">
    <citation type="journal article" date="2007" name="Proc. Natl. Acad. Sci. U.S.A.">
        <title>Deep-sea vent epsilon-proteobacterial genomes provide insights into emergence of pathogens.</title>
        <authorList>
            <person name="Nakagawa S."/>
            <person name="Takaki Y."/>
            <person name="Shimamura S."/>
            <person name="Reysenbach A.-L."/>
            <person name="Takai K."/>
            <person name="Horikoshi K."/>
        </authorList>
    </citation>
    <scope>NUCLEOTIDE SEQUENCE [LARGE SCALE GENOMIC DNA]</scope>
    <source>
        <strain>NBC37-1</strain>
    </source>
</reference>
<protein>
    <recommendedName>
        <fullName evidence="1">Cysteine--tRNA ligase</fullName>
        <ecNumber evidence="1">6.1.1.16</ecNumber>
    </recommendedName>
    <alternativeName>
        <fullName evidence="1">Cysteinyl-tRNA synthetase</fullName>
        <shortName evidence="1">CysRS</shortName>
    </alternativeName>
</protein>
<name>SYC_SULNB</name>
<evidence type="ECO:0000255" key="1">
    <source>
        <dbReference type="HAMAP-Rule" id="MF_00041"/>
    </source>
</evidence>
<evidence type="ECO:0000256" key="2">
    <source>
        <dbReference type="SAM" id="MobiDB-lite"/>
    </source>
</evidence>
<proteinExistence type="inferred from homology"/>
<feature type="chain" id="PRO_1000006615" description="Cysteine--tRNA ligase">
    <location>
        <begin position="1"/>
        <end position="465"/>
    </location>
</feature>
<feature type="region of interest" description="Disordered" evidence="2">
    <location>
        <begin position="153"/>
        <end position="173"/>
    </location>
</feature>
<feature type="short sequence motif" description="'HIGH' region">
    <location>
        <begin position="29"/>
        <end position="39"/>
    </location>
</feature>
<feature type="short sequence motif" description="'KMSKS' region">
    <location>
        <begin position="269"/>
        <end position="273"/>
    </location>
</feature>
<feature type="binding site" evidence="1">
    <location>
        <position position="27"/>
    </location>
    <ligand>
        <name>Zn(2+)</name>
        <dbReference type="ChEBI" id="CHEBI:29105"/>
    </ligand>
</feature>
<feature type="binding site" evidence="1">
    <location>
        <position position="208"/>
    </location>
    <ligand>
        <name>Zn(2+)</name>
        <dbReference type="ChEBI" id="CHEBI:29105"/>
    </ligand>
</feature>
<feature type="binding site" evidence="1">
    <location>
        <position position="237"/>
    </location>
    <ligand>
        <name>Zn(2+)</name>
        <dbReference type="ChEBI" id="CHEBI:29105"/>
    </ligand>
</feature>
<feature type="binding site" evidence="1">
    <location>
        <position position="241"/>
    </location>
    <ligand>
        <name>Zn(2+)</name>
        <dbReference type="ChEBI" id="CHEBI:29105"/>
    </ligand>
</feature>
<feature type="binding site" evidence="1">
    <location>
        <position position="272"/>
    </location>
    <ligand>
        <name>ATP</name>
        <dbReference type="ChEBI" id="CHEBI:30616"/>
    </ligand>
</feature>
<organism>
    <name type="scientific">Sulfurovum sp. (strain NBC37-1)</name>
    <dbReference type="NCBI Taxonomy" id="387093"/>
    <lineage>
        <taxon>Bacteria</taxon>
        <taxon>Pseudomonadati</taxon>
        <taxon>Campylobacterota</taxon>
        <taxon>Epsilonproteobacteria</taxon>
        <taxon>Campylobacterales</taxon>
        <taxon>Sulfurovaceae</taxon>
        <taxon>Sulfurovum</taxon>
    </lineage>
</organism>
<sequence length="465" mass="52605">MQIFDSVQKTKVTFEPIREGEASIYVCGPTVYDDAHLGHARSSLAFDLLSRTLKALGYKVIMAKNFTDIDDKIIKKVEETGKSMQEITSYYIQRYLDEMEQLGVQRADIEPKATESLDAIEQMIQTLIDKDFAYVVSNGDVYFDTSKDSHYGDISHKVSDDDTQSRVEHNSEKRNPRDFALWKACKGEEDICFGAPFSSGRPGWHIECSAMIEKYFKGNGQYSIDIHGGGADLLFPHHENEAAQSRCATGHELAKYWMHNGFVQINGEKMSKSLGNSFFLKDALEVYGGEVLRYYLNSVHYRNDFNFNEEDLQTAKKRLDKLYRLKKRVLPGKASTVNKAFKQALLNAMSDDLNISIALAVIDEMIAETNEKLDTDPKNKALKKETIANIEFIDTLLGFGGKEPFSYFQIGVDEALKEKIEILLQERTEAKKAKDFATSDAIRNELIDMGISIMDTAEGTVWEKA</sequence>
<keyword id="KW-0030">Aminoacyl-tRNA synthetase</keyword>
<keyword id="KW-0067">ATP-binding</keyword>
<keyword id="KW-0963">Cytoplasm</keyword>
<keyword id="KW-0436">Ligase</keyword>
<keyword id="KW-0479">Metal-binding</keyword>
<keyword id="KW-0547">Nucleotide-binding</keyword>
<keyword id="KW-0648">Protein biosynthesis</keyword>
<keyword id="KW-0862">Zinc</keyword>
<accession>A6Q8G9</accession>
<gene>
    <name evidence="1" type="primary">cysS</name>
    <name type="ordered locus">SUN_0820</name>
</gene>
<dbReference type="EC" id="6.1.1.16" evidence="1"/>
<dbReference type="EMBL" id="AP009179">
    <property type="protein sequence ID" value="BAF71778.1"/>
    <property type="molecule type" value="Genomic_DNA"/>
</dbReference>
<dbReference type="RefSeq" id="WP_011980511.1">
    <property type="nucleotide sequence ID" value="NC_009663.1"/>
</dbReference>
<dbReference type="SMR" id="A6Q8G9"/>
<dbReference type="STRING" id="387093.SUN_0820"/>
<dbReference type="KEGG" id="sun:SUN_0820"/>
<dbReference type="eggNOG" id="COG0215">
    <property type="taxonomic scope" value="Bacteria"/>
</dbReference>
<dbReference type="HOGENOM" id="CLU_013528_0_1_7"/>
<dbReference type="OrthoDB" id="9815130at2"/>
<dbReference type="Proteomes" id="UP000006378">
    <property type="component" value="Chromosome"/>
</dbReference>
<dbReference type="GO" id="GO:0005829">
    <property type="term" value="C:cytosol"/>
    <property type="evidence" value="ECO:0007669"/>
    <property type="project" value="TreeGrafter"/>
</dbReference>
<dbReference type="GO" id="GO:0005524">
    <property type="term" value="F:ATP binding"/>
    <property type="evidence" value="ECO:0007669"/>
    <property type="project" value="UniProtKB-UniRule"/>
</dbReference>
<dbReference type="GO" id="GO:0004817">
    <property type="term" value="F:cysteine-tRNA ligase activity"/>
    <property type="evidence" value="ECO:0007669"/>
    <property type="project" value="UniProtKB-UniRule"/>
</dbReference>
<dbReference type="GO" id="GO:0008270">
    <property type="term" value="F:zinc ion binding"/>
    <property type="evidence" value="ECO:0007669"/>
    <property type="project" value="UniProtKB-UniRule"/>
</dbReference>
<dbReference type="GO" id="GO:0006423">
    <property type="term" value="P:cysteinyl-tRNA aminoacylation"/>
    <property type="evidence" value="ECO:0007669"/>
    <property type="project" value="UniProtKB-UniRule"/>
</dbReference>
<dbReference type="CDD" id="cd00672">
    <property type="entry name" value="CysRS_core"/>
    <property type="match status" value="1"/>
</dbReference>
<dbReference type="Gene3D" id="1.20.120.1910">
    <property type="entry name" value="Cysteine-tRNA ligase, C-terminal anti-codon recognition domain"/>
    <property type="match status" value="1"/>
</dbReference>
<dbReference type="Gene3D" id="3.40.50.620">
    <property type="entry name" value="HUPs"/>
    <property type="match status" value="1"/>
</dbReference>
<dbReference type="HAMAP" id="MF_00041">
    <property type="entry name" value="Cys_tRNA_synth"/>
    <property type="match status" value="1"/>
</dbReference>
<dbReference type="InterPro" id="IPR015803">
    <property type="entry name" value="Cys-tRNA-ligase"/>
</dbReference>
<dbReference type="InterPro" id="IPR024909">
    <property type="entry name" value="Cys-tRNA/MSH_ligase"/>
</dbReference>
<dbReference type="InterPro" id="IPR056411">
    <property type="entry name" value="CysS_C"/>
</dbReference>
<dbReference type="InterPro" id="IPR014729">
    <property type="entry name" value="Rossmann-like_a/b/a_fold"/>
</dbReference>
<dbReference type="InterPro" id="IPR032678">
    <property type="entry name" value="tRNA-synt_1_cat_dom"/>
</dbReference>
<dbReference type="InterPro" id="IPR009080">
    <property type="entry name" value="tRNAsynth_Ia_anticodon-bd"/>
</dbReference>
<dbReference type="NCBIfam" id="TIGR00435">
    <property type="entry name" value="cysS"/>
    <property type="match status" value="1"/>
</dbReference>
<dbReference type="PANTHER" id="PTHR10890:SF3">
    <property type="entry name" value="CYSTEINE--TRNA LIGASE, CYTOPLASMIC"/>
    <property type="match status" value="1"/>
</dbReference>
<dbReference type="PANTHER" id="PTHR10890">
    <property type="entry name" value="CYSTEINYL-TRNA SYNTHETASE"/>
    <property type="match status" value="1"/>
</dbReference>
<dbReference type="Pfam" id="PF23493">
    <property type="entry name" value="CysS_C"/>
    <property type="match status" value="1"/>
</dbReference>
<dbReference type="Pfam" id="PF01406">
    <property type="entry name" value="tRNA-synt_1e"/>
    <property type="match status" value="1"/>
</dbReference>
<dbReference type="PRINTS" id="PR00983">
    <property type="entry name" value="TRNASYNTHCYS"/>
</dbReference>
<dbReference type="SUPFAM" id="SSF47323">
    <property type="entry name" value="Anticodon-binding domain of a subclass of class I aminoacyl-tRNA synthetases"/>
    <property type="match status" value="1"/>
</dbReference>
<dbReference type="SUPFAM" id="SSF52374">
    <property type="entry name" value="Nucleotidylyl transferase"/>
    <property type="match status" value="1"/>
</dbReference>